<sequence length="335" mass="37861">MSNKLCQLCNERRPALVRPKTGQKICKECFYYVFETEIHNVIIENKLFVRGERVGIGASGGKDSTVLAYVMKLLNERYDYGLELYLISVDEGIRGYRDDSLDTVKRNQQQYGLPMKIVSYADLYDGWTMDNVVARIGTKNNCTYCGVFRRQALDRAALSLDIHHLVTGHNADDIAETILMNLLRGDVARLPRSTEITTQSDSSPTKRSKPFKYSYEKEIVLYAHYKKLDYFSTECTYSPEAFRGTARAMIKQLENIRPSSILDIIYSGESMQLASSVQEQLPQQTTCERCGFISSNRICKACMLLEGLNKGITGLGLGSDRKTKKLQSQIPACAE</sequence>
<organism>
    <name type="scientific">Schizosaccharomyces pombe (strain 972 / ATCC 24843)</name>
    <name type="common">Fission yeast</name>
    <dbReference type="NCBI Taxonomy" id="284812"/>
    <lineage>
        <taxon>Eukaryota</taxon>
        <taxon>Fungi</taxon>
        <taxon>Dikarya</taxon>
        <taxon>Ascomycota</taxon>
        <taxon>Taphrinomycotina</taxon>
        <taxon>Schizosaccharomycetes</taxon>
        <taxon>Schizosaccharomycetales</taxon>
        <taxon>Schizosaccharomycetaceae</taxon>
        <taxon>Schizosaccharomyces</taxon>
    </lineage>
</organism>
<feature type="chain" id="PRO_0000316593" description="Cytoplasmic tRNA 2-thiolation protein 1">
    <location>
        <begin position="1"/>
        <end position="335"/>
    </location>
</feature>
<feature type="mutagenesis site" description="No thiolation of tRNA(Lys)." evidence="3">
    <original>KD</original>
    <variation>AA</variation>
    <location>
        <begin position="62"/>
        <end position="63"/>
    </location>
</feature>
<feature type="mutagenesis site" description="No thiolation of tRNA(Lys)." evidence="3">
    <original>C</original>
    <variation>A</variation>
    <location>
        <position position="142"/>
    </location>
</feature>
<feature type="mutagenesis site" description="No thiolation of tRNA(Lys)." evidence="3">
    <original>C</original>
    <variation>A</variation>
    <location>
        <position position="145"/>
    </location>
</feature>
<comment type="function">
    <text evidence="1 3">Plays a central role in 2-thiolation of mcm(5)S(2)U at tRNA wobble positions of tRNA(Lys), tRNA(Glu) and tRNA(Gln). Directly binds tRNAs and probably acts by catalyzing adenylation of tRNAs, an intermediate required for 2-thiolation. It is unclear whether it acts as a sulfurtransferase that transfers sulfur from thiocarboxylated urm1 onto the uridine of tRNAs at wobble position. Prior mcm(5) tRNA modification by the elongator complex is required for 2-thiolation. May also be involved in protein urmylation.</text>
</comment>
<comment type="pathway">
    <text evidence="1">tRNA modification; 5-methoxycarbonylmethyl-2-thiouridine-tRNA biosynthesis.</text>
</comment>
<comment type="subunit">
    <text evidence="3">Interacts with ctu2.</text>
</comment>
<comment type="subcellular location">
    <subcellularLocation>
        <location evidence="1 2">Cytoplasm</location>
    </subcellularLocation>
</comment>
<comment type="similarity">
    <text evidence="1">Belongs to the TtcA family. CTU1/NCS6/ATPBD3 subfamily.</text>
</comment>
<evidence type="ECO:0000255" key="1">
    <source>
        <dbReference type="HAMAP-Rule" id="MF_03053"/>
    </source>
</evidence>
<evidence type="ECO:0000269" key="2">
    <source>
    </source>
</evidence>
<evidence type="ECO:0000269" key="3">
    <source>
    </source>
</evidence>
<name>CTU1_SCHPO</name>
<reference key="1">
    <citation type="journal article" date="2002" name="Nature">
        <title>The genome sequence of Schizosaccharomyces pombe.</title>
        <authorList>
            <person name="Wood V."/>
            <person name="Gwilliam R."/>
            <person name="Rajandream M.A."/>
            <person name="Lyne M.H."/>
            <person name="Lyne R."/>
            <person name="Stewart A."/>
            <person name="Sgouros J.G."/>
            <person name="Peat N."/>
            <person name="Hayles J."/>
            <person name="Baker S.G."/>
            <person name="Basham D."/>
            <person name="Bowman S."/>
            <person name="Brooks K."/>
            <person name="Brown D."/>
            <person name="Brown S."/>
            <person name="Chillingworth T."/>
            <person name="Churcher C.M."/>
            <person name="Collins M."/>
            <person name="Connor R."/>
            <person name="Cronin A."/>
            <person name="Davis P."/>
            <person name="Feltwell T."/>
            <person name="Fraser A."/>
            <person name="Gentles S."/>
            <person name="Goble A."/>
            <person name="Hamlin N."/>
            <person name="Harris D.E."/>
            <person name="Hidalgo J."/>
            <person name="Hodgson G."/>
            <person name="Holroyd S."/>
            <person name="Hornsby T."/>
            <person name="Howarth S."/>
            <person name="Huckle E.J."/>
            <person name="Hunt S."/>
            <person name="Jagels K."/>
            <person name="James K.D."/>
            <person name="Jones L."/>
            <person name="Jones M."/>
            <person name="Leather S."/>
            <person name="McDonald S."/>
            <person name="McLean J."/>
            <person name="Mooney P."/>
            <person name="Moule S."/>
            <person name="Mungall K.L."/>
            <person name="Murphy L.D."/>
            <person name="Niblett D."/>
            <person name="Odell C."/>
            <person name="Oliver K."/>
            <person name="O'Neil S."/>
            <person name="Pearson D."/>
            <person name="Quail M.A."/>
            <person name="Rabbinowitsch E."/>
            <person name="Rutherford K.M."/>
            <person name="Rutter S."/>
            <person name="Saunders D."/>
            <person name="Seeger K."/>
            <person name="Sharp S."/>
            <person name="Skelton J."/>
            <person name="Simmonds M.N."/>
            <person name="Squares R."/>
            <person name="Squares S."/>
            <person name="Stevens K."/>
            <person name="Taylor K."/>
            <person name="Taylor R.G."/>
            <person name="Tivey A."/>
            <person name="Walsh S.V."/>
            <person name="Warren T."/>
            <person name="Whitehead S."/>
            <person name="Woodward J.R."/>
            <person name="Volckaert G."/>
            <person name="Aert R."/>
            <person name="Robben J."/>
            <person name="Grymonprez B."/>
            <person name="Weltjens I."/>
            <person name="Vanstreels E."/>
            <person name="Rieger M."/>
            <person name="Schaefer M."/>
            <person name="Mueller-Auer S."/>
            <person name="Gabel C."/>
            <person name="Fuchs M."/>
            <person name="Duesterhoeft A."/>
            <person name="Fritzc C."/>
            <person name="Holzer E."/>
            <person name="Moestl D."/>
            <person name="Hilbert H."/>
            <person name="Borzym K."/>
            <person name="Langer I."/>
            <person name="Beck A."/>
            <person name="Lehrach H."/>
            <person name="Reinhardt R."/>
            <person name="Pohl T.M."/>
            <person name="Eger P."/>
            <person name="Zimmermann W."/>
            <person name="Wedler H."/>
            <person name="Wambutt R."/>
            <person name="Purnelle B."/>
            <person name="Goffeau A."/>
            <person name="Cadieu E."/>
            <person name="Dreano S."/>
            <person name="Gloux S."/>
            <person name="Lelaure V."/>
            <person name="Mottier S."/>
            <person name="Galibert F."/>
            <person name="Aves S.J."/>
            <person name="Xiang Z."/>
            <person name="Hunt C."/>
            <person name="Moore K."/>
            <person name="Hurst S.M."/>
            <person name="Lucas M."/>
            <person name="Rochet M."/>
            <person name="Gaillardin C."/>
            <person name="Tallada V.A."/>
            <person name="Garzon A."/>
            <person name="Thode G."/>
            <person name="Daga R.R."/>
            <person name="Cruzado L."/>
            <person name="Jimenez J."/>
            <person name="Sanchez M."/>
            <person name="del Rey F."/>
            <person name="Benito J."/>
            <person name="Dominguez A."/>
            <person name="Revuelta J.L."/>
            <person name="Moreno S."/>
            <person name="Armstrong J."/>
            <person name="Forsburg S.L."/>
            <person name="Cerutti L."/>
            <person name="Lowe T."/>
            <person name="McCombie W.R."/>
            <person name="Paulsen I."/>
            <person name="Potashkin J."/>
            <person name="Shpakovski G.V."/>
            <person name="Ussery D."/>
            <person name="Barrell B.G."/>
            <person name="Nurse P."/>
        </authorList>
    </citation>
    <scope>NUCLEOTIDE SEQUENCE [LARGE SCALE GENOMIC DNA]</scope>
    <source>
        <strain>972 / ATCC 24843</strain>
    </source>
</reference>
<reference key="2">
    <citation type="journal article" date="2006" name="Nat. Biotechnol.">
        <title>ORFeome cloning and global analysis of protein localization in the fission yeast Schizosaccharomyces pombe.</title>
        <authorList>
            <person name="Matsuyama A."/>
            <person name="Arai R."/>
            <person name="Yashiroda Y."/>
            <person name="Shirai A."/>
            <person name="Kamata A."/>
            <person name="Sekido S."/>
            <person name="Kobayashi Y."/>
            <person name="Hashimoto A."/>
            <person name="Hamamoto M."/>
            <person name="Hiraoka Y."/>
            <person name="Horinouchi S."/>
            <person name="Yoshida M."/>
        </authorList>
    </citation>
    <scope>SUBCELLULAR LOCATION [LARGE SCALE ANALYSIS]</scope>
</reference>
<reference key="3">
    <citation type="journal article" date="2008" name="Proc. Natl. Acad. Sci. U.S.A.">
        <title>The conserved wobble uridine tRNA thiolase Ctu1-Ctu2 is required to maintain genome integrity.</title>
        <authorList>
            <person name="Dewez M."/>
            <person name="Bauer F."/>
            <person name="Dieu M."/>
            <person name="Raes M."/>
            <person name="Vandenhaute J."/>
            <person name="Hermand D."/>
        </authorList>
    </citation>
    <scope>FUNCTION</scope>
    <scope>INTERACTION WITH CTU2</scope>
    <scope>MUTAGENESIS OF 62-LYS--ASP-63; CYS-142 AND CYS-145</scope>
</reference>
<gene>
    <name type="primary">ncs6</name>
    <name type="synonym">ctu1</name>
    <name type="ORF">SPBC2G5.03</name>
</gene>
<proteinExistence type="evidence at protein level"/>
<accession>O94282</accession>
<keyword id="KW-0963">Cytoplasm</keyword>
<keyword id="KW-1185">Reference proteome</keyword>
<keyword id="KW-0694">RNA-binding</keyword>
<keyword id="KW-0808">Transferase</keyword>
<keyword id="KW-0819">tRNA processing</keyword>
<keyword id="KW-0820">tRNA-binding</keyword>
<dbReference type="EC" id="2.7.7.-" evidence="1"/>
<dbReference type="EMBL" id="CU329671">
    <property type="protein sequence ID" value="CAA21879.1"/>
    <property type="molecule type" value="Genomic_DNA"/>
</dbReference>
<dbReference type="PIR" id="T40160">
    <property type="entry name" value="T40160"/>
</dbReference>
<dbReference type="RefSeq" id="NP_596064.1">
    <property type="nucleotide sequence ID" value="NM_001021975.2"/>
</dbReference>
<dbReference type="SMR" id="O94282"/>
<dbReference type="BioGRID" id="276844">
    <property type="interactions" value="44"/>
</dbReference>
<dbReference type="ComplexPortal" id="CPX-25770">
    <property type="entry name" value="Cytosolic tRNA wobble base thiouridylase complex"/>
</dbReference>
<dbReference type="DIP" id="DIP-29900N"/>
<dbReference type="FunCoup" id="O94282">
    <property type="interactions" value="207"/>
</dbReference>
<dbReference type="IntAct" id="O94282">
    <property type="interactions" value="1"/>
</dbReference>
<dbReference type="STRING" id="284812.O94282"/>
<dbReference type="iPTMnet" id="O94282"/>
<dbReference type="PaxDb" id="4896-SPBC2G5.03.1"/>
<dbReference type="EnsemblFungi" id="SPBC2G5.03.1">
    <property type="protein sequence ID" value="SPBC2G5.03.1:pep"/>
    <property type="gene ID" value="SPBC2G5.03"/>
</dbReference>
<dbReference type="GeneID" id="2540314"/>
<dbReference type="KEGG" id="spo:2540314"/>
<dbReference type="PomBase" id="SPBC2G5.03"/>
<dbReference type="VEuPathDB" id="FungiDB:SPBC2G5.03"/>
<dbReference type="eggNOG" id="KOG2840">
    <property type="taxonomic scope" value="Eukaryota"/>
</dbReference>
<dbReference type="HOGENOM" id="CLU_026481_1_0_1"/>
<dbReference type="InParanoid" id="O94282"/>
<dbReference type="OMA" id="MGKCERC"/>
<dbReference type="PhylomeDB" id="O94282"/>
<dbReference type="UniPathway" id="UPA00988"/>
<dbReference type="PRO" id="PR:O94282"/>
<dbReference type="Proteomes" id="UP000002485">
    <property type="component" value="Chromosome II"/>
</dbReference>
<dbReference type="GO" id="GO:0005829">
    <property type="term" value="C:cytosol"/>
    <property type="evidence" value="ECO:0000250"/>
    <property type="project" value="UniProtKB"/>
</dbReference>
<dbReference type="GO" id="GO:0002144">
    <property type="term" value="C:cytosolic tRNA wobble base thiouridylase complex"/>
    <property type="evidence" value="ECO:0000353"/>
    <property type="project" value="PomBase"/>
</dbReference>
<dbReference type="GO" id="GO:0005524">
    <property type="term" value="F:ATP binding"/>
    <property type="evidence" value="ECO:0000255"/>
    <property type="project" value="PomBase"/>
</dbReference>
<dbReference type="GO" id="GO:0016779">
    <property type="term" value="F:nucleotidyltransferase activity"/>
    <property type="evidence" value="ECO:0007669"/>
    <property type="project" value="UniProtKB-UniRule"/>
</dbReference>
<dbReference type="GO" id="GO:0000049">
    <property type="term" value="F:tRNA binding"/>
    <property type="evidence" value="ECO:0000353"/>
    <property type="project" value="PomBase"/>
</dbReference>
<dbReference type="GO" id="GO:0032447">
    <property type="term" value="P:protein urmylation"/>
    <property type="evidence" value="ECO:0007669"/>
    <property type="project" value="UniProtKB-UniRule"/>
</dbReference>
<dbReference type="GO" id="GO:0034227">
    <property type="term" value="P:tRNA thio-modification"/>
    <property type="evidence" value="ECO:0000250"/>
    <property type="project" value="UniProtKB"/>
</dbReference>
<dbReference type="GO" id="GO:0002143">
    <property type="term" value="P:tRNA wobble position uridine thiolation"/>
    <property type="evidence" value="ECO:0000315"/>
    <property type="project" value="PomBase"/>
</dbReference>
<dbReference type="GO" id="GO:0002098">
    <property type="term" value="P:tRNA wobble uridine modification"/>
    <property type="evidence" value="ECO:0000250"/>
    <property type="project" value="UniProtKB"/>
</dbReference>
<dbReference type="CDD" id="cd01713">
    <property type="entry name" value="CTU1-like"/>
    <property type="match status" value="1"/>
</dbReference>
<dbReference type="FunFam" id="3.40.50.620:FF:000463">
    <property type="entry name" value="Cytoplasmic tRNA 2-thiolation protein 1"/>
    <property type="match status" value="1"/>
</dbReference>
<dbReference type="Gene3D" id="3.40.50.620">
    <property type="entry name" value="HUPs"/>
    <property type="match status" value="1"/>
</dbReference>
<dbReference type="HAMAP" id="MF_03053">
    <property type="entry name" value="CTU1"/>
    <property type="match status" value="1"/>
</dbReference>
<dbReference type="InterPro" id="IPR056369">
    <property type="entry name" value="CTU1-like_ATP-bd"/>
</dbReference>
<dbReference type="InterPro" id="IPR032442">
    <property type="entry name" value="CTU1_C"/>
</dbReference>
<dbReference type="InterPro" id="IPR000541">
    <property type="entry name" value="Ncs6/Tuc1/Ctu1"/>
</dbReference>
<dbReference type="InterPro" id="IPR014729">
    <property type="entry name" value="Rossmann-like_a/b/a_fold"/>
</dbReference>
<dbReference type="InterPro" id="IPR011063">
    <property type="entry name" value="TilS/TtcA_N"/>
</dbReference>
<dbReference type="InterPro" id="IPR035107">
    <property type="entry name" value="tRNA_thiolation_TtcA_Ctu1"/>
</dbReference>
<dbReference type="InterPro" id="IPR020554">
    <property type="entry name" value="UPF0021_CS"/>
</dbReference>
<dbReference type="NCBIfam" id="TIGR00269">
    <property type="entry name" value="TIGR00269 family protein"/>
    <property type="match status" value="1"/>
</dbReference>
<dbReference type="PANTHER" id="PTHR11807">
    <property type="entry name" value="ATPASES OF THE PP SUPERFAMILY-RELATED"/>
    <property type="match status" value="1"/>
</dbReference>
<dbReference type="PANTHER" id="PTHR11807:SF12">
    <property type="entry name" value="CYTOPLASMIC TRNA 2-THIOLATION PROTEIN 1"/>
    <property type="match status" value="1"/>
</dbReference>
<dbReference type="Pfam" id="PF01171">
    <property type="entry name" value="ATP_bind_3"/>
    <property type="match status" value="1"/>
</dbReference>
<dbReference type="Pfam" id="PF16503">
    <property type="entry name" value="zn-ribbon_14"/>
    <property type="match status" value="1"/>
</dbReference>
<dbReference type="PIRSF" id="PIRSF004976">
    <property type="entry name" value="ATPase_YdaO"/>
    <property type="match status" value="1"/>
</dbReference>
<dbReference type="SUPFAM" id="SSF52402">
    <property type="entry name" value="Adenine nucleotide alpha hydrolases-like"/>
    <property type="match status" value="1"/>
</dbReference>
<dbReference type="PROSITE" id="PS01263">
    <property type="entry name" value="UPF0021"/>
    <property type="match status" value="1"/>
</dbReference>
<protein>
    <recommendedName>
        <fullName evidence="1">Cytoplasmic tRNA 2-thiolation protein 1</fullName>
        <ecNumber evidence="1">2.7.7.-</ecNumber>
    </recommendedName>
    <alternativeName>
        <fullName evidence="1">Cytoplasmic tRNA adenylyltransferase 1</fullName>
    </alternativeName>
</protein>